<gene>
    <name type="primary">gata5-a</name>
    <name type="synonym">gata-4a</name>
    <name type="synonym">gata5a</name>
</gene>
<evidence type="ECO:0000255" key="1">
    <source>
        <dbReference type="PROSITE-ProRule" id="PRU00094"/>
    </source>
</evidence>
<evidence type="ECO:0000256" key="2">
    <source>
        <dbReference type="SAM" id="MobiDB-lite"/>
    </source>
</evidence>
<comment type="subcellular location">
    <subcellularLocation>
        <location>Nucleus</location>
    </subcellularLocation>
</comment>
<comment type="tissue specificity">
    <text>Highly expressed in heart and throughout the gut, with lower levels detected in lung, gonads, liver, and gall bladder.</text>
</comment>
<comment type="developmental stage">
    <text>In presumptive cardiac ventral mesoderm at the time that bilateral progenitors fuse and form the cardiac tube. By stage 30, expressed in the developing atria and ventricles; at stage 38, in endocardial layer. By stage 40, detected in the great vessels.</text>
</comment>
<reference key="1">
    <citation type="journal article" date="1993" name="Development">
        <title>GATA-4 is a novel transcription factor expressed in endocardium of the developing heart.</title>
        <authorList>
            <person name="Kelley C."/>
            <person name="Blumberg H."/>
            <person name="Zon L.I."/>
            <person name="Evans T."/>
        </authorList>
    </citation>
    <scope>NUCLEOTIDE SEQUENCE [MRNA]</scope>
</reference>
<reference key="2">
    <citation type="submission" date="2004-10" db="EMBL/GenBank/DDBJ databases">
        <authorList>
            <consortium name="NIH - Xenopus Gene Collection (XGC) project"/>
        </authorList>
    </citation>
    <scope>NUCLEOTIDE SEQUENCE [LARGE SCALE MRNA]</scope>
    <source>
        <tissue>Embryo</tissue>
    </source>
</reference>
<reference key="3">
    <citation type="journal article" date="1994" name="J. Biol. Chem.">
        <title>GATA-4/5/6, a subfamily of three transcription factors transcribed in developing heart and gut.</title>
        <authorList>
            <person name="Laverriere A.C."/>
            <person name="Macneill C."/>
            <person name="Mueller C."/>
            <person name="Poelmann R.E."/>
            <person name="Burch J.B.E."/>
            <person name="Evans T."/>
        </authorList>
    </citation>
    <scope>RENAME XGATA-4 TO XGATA-5</scope>
</reference>
<accession>P43695</accession>
<accession>Q5U4R1</accession>
<name>GAT5A_XENLA</name>
<organism>
    <name type="scientific">Xenopus laevis</name>
    <name type="common">African clawed frog</name>
    <dbReference type="NCBI Taxonomy" id="8355"/>
    <lineage>
        <taxon>Eukaryota</taxon>
        <taxon>Metazoa</taxon>
        <taxon>Chordata</taxon>
        <taxon>Craniata</taxon>
        <taxon>Vertebrata</taxon>
        <taxon>Euteleostomi</taxon>
        <taxon>Amphibia</taxon>
        <taxon>Batrachia</taxon>
        <taxon>Anura</taxon>
        <taxon>Pipoidea</taxon>
        <taxon>Pipidae</taxon>
        <taxon>Xenopodinae</taxon>
        <taxon>Xenopus</taxon>
        <taxon>Xenopus</taxon>
    </lineage>
</organism>
<keyword id="KW-0010">Activator</keyword>
<keyword id="KW-0238">DNA-binding</keyword>
<keyword id="KW-0479">Metal-binding</keyword>
<keyword id="KW-0539">Nucleus</keyword>
<keyword id="KW-1185">Reference proteome</keyword>
<keyword id="KW-0677">Repeat</keyword>
<keyword id="KW-0804">Transcription</keyword>
<keyword id="KW-0805">Transcription regulation</keyword>
<keyword id="KW-0862">Zinc</keyword>
<keyword id="KW-0863">Zinc-finger</keyword>
<feature type="chain" id="PRO_0000083421" description="GATA-binding factor 5-A">
    <location>
        <begin position="1"/>
        <end position="390"/>
    </location>
</feature>
<feature type="zinc finger region" description="GATA-type 1" evidence="1">
    <location>
        <begin position="183"/>
        <end position="207"/>
    </location>
</feature>
<feature type="zinc finger region" description="GATA-type 2" evidence="1">
    <location>
        <begin position="237"/>
        <end position="261"/>
    </location>
</feature>
<feature type="region of interest" description="Disordered" evidence="2">
    <location>
        <begin position="76"/>
        <end position="101"/>
    </location>
</feature>
<feature type="region of interest" description="Disordered" evidence="2">
    <location>
        <begin position="279"/>
        <end position="324"/>
    </location>
</feature>
<feature type="compositionally biased region" description="Polar residues" evidence="2">
    <location>
        <begin position="76"/>
        <end position="100"/>
    </location>
</feature>
<feature type="compositionally biased region" description="Basic residues" evidence="2">
    <location>
        <begin position="283"/>
        <end position="292"/>
    </location>
</feature>
<feature type="compositionally biased region" description="Low complexity" evidence="2">
    <location>
        <begin position="293"/>
        <end position="314"/>
    </location>
</feature>
<proteinExistence type="evidence at transcript level"/>
<sequence>MYPSLALTANHAQPAYSHDTPNFLHSTGSPPVYVPTSRMPAMLQSLPYLQSCDTAHQGHHLANHPGWAQTAESHAFNASSPHTPTGFSYSHSPPVGNSSARDGGYQSPLIMGGGARDQYGNTLVRTGSYPSPYSYVGADMPPSWAAGHFEGSMLHSLQGRQSLSGRRSSLEFLEEFPGEGRECVNCGAMSTPLWRRDGTGHYLCNACGLYHKMNGMNRPLIKPQKRLSSSRRAGLCCTNCHTSTTTLWRRNSEGEPVCNACGLYMKLHGVPRPLAMKKESIQTRKRKPKNIGKGKTSTGSSTSANNSPSSVTNSDPTPVLKTEPNITSQYSGQAIVPVSQGHSQTDDLVNGSHELKFMPDEYTYSPTALSQQSGLSVPLRQESWCALALA</sequence>
<dbReference type="EMBL" id="L13701">
    <property type="protein sequence ID" value="AAA63686.1"/>
    <property type="molecule type" value="mRNA"/>
</dbReference>
<dbReference type="EMBL" id="BC084985">
    <property type="protein sequence ID" value="AAH84985.1"/>
    <property type="molecule type" value="mRNA"/>
</dbReference>
<dbReference type="PIR" id="I51419">
    <property type="entry name" value="I51419"/>
</dbReference>
<dbReference type="RefSeq" id="NP_001081962.1">
    <property type="nucleotide sequence ID" value="NM_001088493.1"/>
</dbReference>
<dbReference type="SMR" id="P43695"/>
<dbReference type="DNASU" id="398144"/>
<dbReference type="GeneID" id="398144"/>
<dbReference type="KEGG" id="xla:398144"/>
<dbReference type="AGR" id="Xenbase:XB-GENE-864887"/>
<dbReference type="CTD" id="398144"/>
<dbReference type="Xenbase" id="XB-GENE-864887">
    <property type="gene designation" value="gata5.S"/>
</dbReference>
<dbReference type="OMA" id="FEPEDYA"/>
<dbReference type="OrthoDB" id="515401at2759"/>
<dbReference type="Proteomes" id="UP000186698">
    <property type="component" value="Chromosome 9_10S"/>
</dbReference>
<dbReference type="GO" id="GO:0005634">
    <property type="term" value="C:nucleus"/>
    <property type="evidence" value="ECO:0000314"/>
    <property type="project" value="MGI"/>
</dbReference>
<dbReference type="GO" id="GO:0000981">
    <property type="term" value="F:DNA-binding transcription factor activity, RNA polymerase II-specific"/>
    <property type="evidence" value="ECO:0000318"/>
    <property type="project" value="GO_Central"/>
</dbReference>
<dbReference type="GO" id="GO:0000978">
    <property type="term" value="F:RNA polymerase II cis-regulatory region sequence-specific DNA binding"/>
    <property type="evidence" value="ECO:0000318"/>
    <property type="project" value="GO_Central"/>
</dbReference>
<dbReference type="GO" id="GO:0000976">
    <property type="term" value="F:transcription cis-regulatory region binding"/>
    <property type="evidence" value="ECO:0000314"/>
    <property type="project" value="MGI"/>
</dbReference>
<dbReference type="GO" id="GO:0008270">
    <property type="term" value="F:zinc ion binding"/>
    <property type="evidence" value="ECO:0007669"/>
    <property type="project" value="UniProtKB-KW"/>
</dbReference>
<dbReference type="GO" id="GO:0048738">
    <property type="term" value="P:cardiac muscle tissue development"/>
    <property type="evidence" value="ECO:0000318"/>
    <property type="project" value="GO_Central"/>
</dbReference>
<dbReference type="GO" id="GO:0045165">
    <property type="term" value="P:cell fate commitment"/>
    <property type="evidence" value="ECO:0000318"/>
    <property type="project" value="GO_Central"/>
</dbReference>
<dbReference type="GO" id="GO:0000122">
    <property type="term" value="P:negative regulation of transcription by RNA polymerase II"/>
    <property type="evidence" value="ECO:0000318"/>
    <property type="project" value="GO_Central"/>
</dbReference>
<dbReference type="GO" id="GO:0045944">
    <property type="term" value="P:positive regulation of transcription by RNA polymerase II"/>
    <property type="evidence" value="ECO:0000314"/>
    <property type="project" value="MGI"/>
</dbReference>
<dbReference type="CDD" id="cd00202">
    <property type="entry name" value="ZnF_GATA"/>
    <property type="match status" value="2"/>
</dbReference>
<dbReference type="FunFam" id="3.30.50.10:FF:000001">
    <property type="entry name" value="GATA transcription factor (GATAd)"/>
    <property type="match status" value="1"/>
</dbReference>
<dbReference type="FunFam" id="3.30.50.10:FF:000032">
    <property type="entry name" value="Transcription factor GATA-3"/>
    <property type="match status" value="1"/>
</dbReference>
<dbReference type="Gene3D" id="3.30.50.10">
    <property type="entry name" value="Erythroid Transcription Factor GATA-1, subunit A"/>
    <property type="match status" value="2"/>
</dbReference>
<dbReference type="InterPro" id="IPR008013">
    <property type="entry name" value="GATA_N"/>
</dbReference>
<dbReference type="InterPro" id="IPR016375">
    <property type="entry name" value="TF_GATA_4/5/6"/>
</dbReference>
<dbReference type="InterPro" id="IPR039355">
    <property type="entry name" value="Transcription_factor_GATA"/>
</dbReference>
<dbReference type="InterPro" id="IPR000679">
    <property type="entry name" value="Znf_GATA"/>
</dbReference>
<dbReference type="InterPro" id="IPR013088">
    <property type="entry name" value="Znf_NHR/GATA"/>
</dbReference>
<dbReference type="PANTHER" id="PTHR10071">
    <property type="entry name" value="TRANSCRIPTION FACTOR GATA FAMILY MEMBER"/>
    <property type="match status" value="1"/>
</dbReference>
<dbReference type="PANTHER" id="PTHR10071:SF289">
    <property type="entry name" value="TRANSCRIPTION FACTOR GATA-5"/>
    <property type="match status" value="1"/>
</dbReference>
<dbReference type="Pfam" id="PF00320">
    <property type="entry name" value="GATA"/>
    <property type="match status" value="2"/>
</dbReference>
<dbReference type="Pfam" id="PF05349">
    <property type="entry name" value="GATA-N"/>
    <property type="match status" value="1"/>
</dbReference>
<dbReference type="PIRSF" id="PIRSF003028">
    <property type="entry name" value="TF_GATA_4/5/6"/>
    <property type="match status" value="1"/>
</dbReference>
<dbReference type="PRINTS" id="PR00619">
    <property type="entry name" value="GATAZNFINGER"/>
</dbReference>
<dbReference type="SMART" id="SM00401">
    <property type="entry name" value="ZnF_GATA"/>
    <property type="match status" value="2"/>
</dbReference>
<dbReference type="SUPFAM" id="SSF57716">
    <property type="entry name" value="Glucocorticoid receptor-like (DNA-binding domain)"/>
    <property type="match status" value="2"/>
</dbReference>
<dbReference type="PROSITE" id="PS00344">
    <property type="entry name" value="GATA_ZN_FINGER_1"/>
    <property type="match status" value="2"/>
</dbReference>
<dbReference type="PROSITE" id="PS50114">
    <property type="entry name" value="GATA_ZN_FINGER_2"/>
    <property type="match status" value="2"/>
</dbReference>
<protein>
    <recommendedName>
        <fullName>GATA-binding factor 5-A</fullName>
    </recommendedName>
    <alternativeName>
        <fullName>Transcription factor xGATA-5A</fullName>
    </alternativeName>
</protein>